<gene>
    <name evidence="1" type="primary">aceK</name>
    <name type="ordered locus">SPAB_05179</name>
</gene>
<protein>
    <recommendedName>
        <fullName evidence="1">Isocitrate dehydrogenase kinase/phosphatase</fullName>
        <shortName evidence="1">IDH kinase/phosphatase</shortName>
        <shortName evidence="1">IDHK/P</shortName>
        <ecNumber evidence="1">2.7.11.5</ecNumber>
        <ecNumber evidence="1">3.1.3.-</ecNumber>
    </recommendedName>
</protein>
<organism>
    <name type="scientific">Salmonella paratyphi B (strain ATCC BAA-1250 / SPB7)</name>
    <dbReference type="NCBI Taxonomy" id="1016998"/>
    <lineage>
        <taxon>Bacteria</taxon>
        <taxon>Pseudomonadati</taxon>
        <taxon>Pseudomonadota</taxon>
        <taxon>Gammaproteobacteria</taxon>
        <taxon>Enterobacterales</taxon>
        <taxon>Enterobacteriaceae</taxon>
        <taxon>Salmonella</taxon>
    </lineage>
</organism>
<accession>A9N0M7</accession>
<dbReference type="EC" id="2.7.11.5" evidence="1"/>
<dbReference type="EC" id="3.1.3.-" evidence="1"/>
<dbReference type="EMBL" id="CP000886">
    <property type="protein sequence ID" value="ABX70456.1"/>
    <property type="molecule type" value="Genomic_DNA"/>
</dbReference>
<dbReference type="RefSeq" id="WP_001137259.1">
    <property type="nucleotide sequence ID" value="NC_010102.1"/>
</dbReference>
<dbReference type="SMR" id="A9N0M7"/>
<dbReference type="KEGG" id="spq:SPAB_05179"/>
<dbReference type="PATRIC" id="fig|1016998.12.peg.4849"/>
<dbReference type="HOGENOM" id="CLU_033804_1_1_6"/>
<dbReference type="BioCyc" id="SENT1016998:SPAB_RS21085-MONOMER"/>
<dbReference type="Proteomes" id="UP000008556">
    <property type="component" value="Chromosome"/>
</dbReference>
<dbReference type="GO" id="GO:0005737">
    <property type="term" value="C:cytoplasm"/>
    <property type="evidence" value="ECO:0007669"/>
    <property type="project" value="UniProtKB-SubCell"/>
</dbReference>
<dbReference type="GO" id="GO:0008772">
    <property type="term" value="F:[isocitrate dehydrogenase (NADP+)] kinase activity"/>
    <property type="evidence" value="ECO:0007669"/>
    <property type="project" value="UniProtKB-UniRule"/>
</dbReference>
<dbReference type="GO" id="GO:0016208">
    <property type="term" value="F:AMP binding"/>
    <property type="evidence" value="ECO:0007669"/>
    <property type="project" value="TreeGrafter"/>
</dbReference>
<dbReference type="GO" id="GO:0005524">
    <property type="term" value="F:ATP binding"/>
    <property type="evidence" value="ECO:0007669"/>
    <property type="project" value="UniProtKB-UniRule"/>
</dbReference>
<dbReference type="GO" id="GO:0004721">
    <property type="term" value="F:phosphoprotein phosphatase activity"/>
    <property type="evidence" value="ECO:0007669"/>
    <property type="project" value="UniProtKB-KW"/>
</dbReference>
<dbReference type="GO" id="GO:0004674">
    <property type="term" value="F:protein serine/threonine kinase activity"/>
    <property type="evidence" value="ECO:0007669"/>
    <property type="project" value="UniProtKB-KW"/>
</dbReference>
<dbReference type="GO" id="GO:0006006">
    <property type="term" value="P:glucose metabolic process"/>
    <property type="evidence" value="ECO:0007669"/>
    <property type="project" value="InterPro"/>
</dbReference>
<dbReference type="GO" id="GO:0006097">
    <property type="term" value="P:glyoxylate cycle"/>
    <property type="evidence" value="ECO:0007669"/>
    <property type="project" value="UniProtKB-UniRule"/>
</dbReference>
<dbReference type="GO" id="GO:0006099">
    <property type="term" value="P:tricarboxylic acid cycle"/>
    <property type="evidence" value="ECO:0007669"/>
    <property type="project" value="UniProtKB-UniRule"/>
</dbReference>
<dbReference type="HAMAP" id="MF_00747">
    <property type="entry name" value="AceK"/>
    <property type="match status" value="1"/>
</dbReference>
<dbReference type="InterPro" id="IPR046855">
    <property type="entry name" value="AceK_kinase"/>
</dbReference>
<dbReference type="InterPro" id="IPR046854">
    <property type="entry name" value="AceK_regulatory"/>
</dbReference>
<dbReference type="InterPro" id="IPR010452">
    <property type="entry name" value="Isocitrate_DH_AceK"/>
</dbReference>
<dbReference type="NCBIfam" id="NF002804">
    <property type="entry name" value="PRK02946.1"/>
    <property type="match status" value="1"/>
</dbReference>
<dbReference type="PANTHER" id="PTHR39559">
    <property type="match status" value="1"/>
</dbReference>
<dbReference type="PANTHER" id="PTHR39559:SF1">
    <property type="entry name" value="ISOCITRATE DEHYDROGENASE KINASE_PHOSPHATASE"/>
    <property type="match status" value="1"/>
</dbReference>
<dbReference type="Pfam" id="PF06315">
    <property type="entry name" value="AceK_kinase"/>
    <property type="match status" value="1"/>
</dbReference>
<dbReference type="Pfam" id="PF20423">
    <property type="entry name" value="AceK_regulatory"/>
    <property type="match status" value="1"/>
</dbReference>
<dbReference type="PIRSF" id="PIRSF000719">
    <property type="entry name" value="AceK"/>
    <property type="match status" value="1"/>
</dbReference>
<feature type="chain" id="PRO_1000083485" description="Isocitrate dehydrogenase kinase/phosphatase">
    <location>
        <begin position="1"/>
        <end position="583"/>
    </location>
</feature>
<feature type="active site" evidence="1">
    <location>
        <position position="371"/>
    </location>
</feature>
<feature type="binding site" evidence="1">
    <location>
        <begin position="315"/>
        <end position="321"/>
    </location>
    <ligand>
        <name>ATP</name>
        <dbReference type="ChEBI" id="CHEBI:30616"/>
    </ligand>
</feature>
<feature type="binding site" evidence="1">
    <location>
        <position position="336"/>
    </location>
    <ligand>
        <name>ATP</name>
        <dbReference type="ChEBI" id="CHEBI:30616"/>
    </ligand>
</feature>
<comment type="function">
    <text evidence="1">Bifunctional enzyme which can phosphorylate or dephosphorylate isocitrate dehydrogenase (IDH) on a specific serine residue. This is a regulatory mechanism which enables bacteria to bypass the Krebs cycle via the glyoxylate shunt in response to the source of carbon. When bacteria are grown on glucose, IDH is fully active and unphosphorylated, but when grown on acetate or ethanol, the activity of IDH declines drastically concomitant with its phosphorylation.</text>
</comment>
<comment type="catalytic activity">
    <reaction evidence="1">
        <text>L-seryl-[isocitrate dehydrogenase] + ATP = O-phospho-L-seryl-[isocitrate dehydrogenase] + ADP + H(+)</text>
        <dbReference type="Rhea" id="RHEA:43540"/>
        <dbReference type="Rhea" id="RHEA-COMP:10605"/>
        <dbReference type="Rhea" id="RHEA-COMP:10606"/>
        <dbReference type="ChEBI" id="CHEBI:15378"/>
        <dbReference type="ChEBI" id="CHEBI:29999"/>
        <dbReference type="ChEBI" id="CHEBI:30616"/>
        <dbReference type="ChEBI" id="CHEBI:83421"/>
        <dbReference type="ChEBI" id="CHEBI:456216"/>
        <dbReference type="EC" id="2.7.11.5"/>
    </reaction>
</comment>
<comment type="subcellular location">
    <subcellularLocation>
        <location evidence="1">Cytoplasm</location>
    </subcellularLocation>
</comment>
<comment type="similarity">
    <text evidence="1">Belongs to the AceK family.</text>
</comment>
<sequence>MPRGLELLIAQTILQGFDAQYGRFLEVTSGAQQRFEQADWHAVQQAMKSRIHLYDHHVGLVVEQLRCITDGKSTDADFLLRVKEHYTRLLPDYPRFEIAESFFNSVYCRLFDHRSLTPERLFIFSSQPERRFRTIPRPLAKDFFPDHGWELLLMRILSDLPLRLPWQNKSRDIRYIIAHLTETLGEDALPRCHVQVANELFYRNKAAWLVGKLTTPDGTLPFLLPIHRTDEGELFVDTCLTTTAEASIVFGFARSYFMVYAPLPAALVEWLREILPGKTTAELYMAIGCQKHAKTESYREYLCYLAESDEKFIEAPGIRGMVMLVFTLPGFDRVFKIIKDKFAPQKEMSAAHVRACYQLVKEHDRVGRMADTQEFENFVLDKRQIDPALMALLRQEVPEKITDLGEHIVIRHLYIERRMVPLNIWLEQVEGQQLRDAIEEYGNAIRQLAAANIFPGDMLFKNFGVTRHGRVVFYDYDEICYMTEVNFRDIPPARYPEDELASEPWYSVSPGDVFPEEFRHWLCADPRIGPLFEEMHADLFRADYWRALQTRIKEGHVEDVYAYRRRQRFSVRYGAISSTANSS</sequence>
<name>ACEK_SALPB</name>
<keyword id="KW-0067">ATP-binding</keyword>
<keyword id="KW-0963">Cytoplasm</keyword>
<keyword id="KW-0329">Glyoxylate bypass</keyword>
<keyword id="KW-0378">Hydrolase</keyword>
<keyword id="KW-0418">Kinase</keyword>
<keyword id="KW-0547">Nucleotide-binding</keyword>
<keyword id="KW-0904">Protein phosphatase</keyword>
<keyword id="KW-0723">Serine/threonine-protein kinase</keyword>
<keyword id="KW-0808">Transferase</keyword>
<keyword id="KW-0816">Tricarboxylic acid cycle</keyword>
<reference key="1">
    <citation type="submission" date="2007-11" db="EMBL/GenBank/DDBJ databases">
        <authorList>
            <consortium name="The Salmonella enterica serovar Paratyphi B Genome Sequencing Project"/>
            <person name="McClelland M."/>
            <person name="Sanderson E.K."/>
            <person name="Porwollik S."/>
            <person name="Spieth J."/>
            <person name="Clifton W.S."/>
            <person name="Fulton R."/>
            <person name="Cordes M."/>
            <person name="Wollam A."/>
            <person name="Shah N."/>
            <person name="Pepin K."/>
            <person name="Bhonagiri V."/>
            <person name="Nash W."/>
            <person name="Johnson M."/>
            <person name="Thiruvilangam P."/>
            <person name="Wilson R."/>
        </authorList>
    </citation>
    <scope>NUCLEOTIDE SEQUENCE [LARGE SCALE GENOMIC DNA]</scope>
    <source>
        <strain>ATCC BAA-1250 / SPB7</strain>
    </source>
</reference>
<proteinExistence type="inferred from homology"/>
<evidence type="ECO:0000255" key="1">
    <source>
        <dbReference type="HAMAP-Rule" id="MF_00747"/>
    </source>
</evidence>